<comment type="function">
    <text evidence="2">Component of the ubiquinol-cytochrome c reductase complex (complex III or cytochrome b-c1 complex) that is part of the mitochondrial respiratory chain. The b-c1 complex mediates electron transfer from ubiquinol to cytochrome c. Contributes to the generation of a proton gradient across the mitochondrial membrane that is then used for ATP synthesis.</text>
</comment>
<comment type="cofactor">
    <cofactor evidence="2">
        <name>heme b</name>
        <dbReference type="ChEBI" id="CHEBI:60344"/>
    </cofactor>
    <text evidence="2">Binds 2 heme b groups non-covalently.</text>
</comment>
<comment type="subunit">
    <text evidence="2">The cytochrome bc1 complex contains 11 subunits: 3 respiratory subunits (MT-CYB, CYC1 and UQCRFS1), 2 core proteins (UQCRC1 and UQCRC2) and 6 low-molecular weight proteins (UQCRH/QCR6, UQCRB/QCR7, UQCRQ/QCR8, UQCR10/QCR9, UQCR11/QCR10 and a cleavage product of UQCRFS1). This cytochrome bc1 complex then forms a dimer.</text>
</comment>
<comment type="subcellular location">
    <subcellularLocation>
        <location evidence="2">Mitochondrion inner membrane</location>
        <topology evidence="2">Multi-pass membrane protein</topology>
    </subcellularLocation>
</comment>
<comment type="miscellaneous">
    <text evidence="1">Heme 1 (or BL or b562) is low-potential and absorbs at about 562 nm, and heme 2 (or BH or b566) is high-potential and absorbs at about 566 nm.</text>
</comment>
<comment type="similarity">
    <text evidence="3 4">Belongs to the cytochrome b family.</text>
</comment>
<comment type="caution">
    <text evidence="2">The full-length protein contains only eight transmembrane helices, not nine as predicted by bioinformatics tools.</text>
</comment>
<keyword id="KW-0249">Electron transport</keyword>
<keyword id="KW-0349">Heme</keyword>
<keyword id="KW-0408">Iron</keyword>
<keyword id="KW-0472">Membrane</keyword>
<keyword id="KW-0479">Metal-binding</keyword>
<keyword id="KW-0496">Mitochondrion</keyword>
<keyword id="KW-0999">Mitochondrion inner membrane</keyword>
<keyword id="KW-0679">Respiratory chain</keyword>
<keyword id="KW-0812">Transmembrane</keyword>
<keyword id="KW-1133">Transmembrane helix</keyword>
<keyword id="KW-0813">Transport</keyword>
<keyword id="KW-0830">Ubiquinone</keyword>
<accession>Q71FI6</accession>
<feature type="chain" id="PRO_0000247333" description="Cytochrome b">
    <location>
        <begin position="1"/>
        <end position="379"/>
    </location>
</feature>
<feature type="transmembrane region" description="Helical" evidence="2">
    <location>
        <begin position="33"/>
        <end position="53"/>
    </location>
</feature>
<feature type="transmembrane region" description="Helical" evidence="2">
    <location>
        <begin position="77"/>
        <end position="98"/>
    </location>
</feature>
<feature type="transmembrane region" description="Helical" evidence="2">
    <location>
        <begin position="113"/>
        <end position="133"/>
    </location>
</feature>
<feature type="transmembrane region" description="Helical" evidence="2">
    <location>
        <begin position="178"/>
        <end position="198"/>
    </location>
</feature>
<feature type="transmembrane region" description="Helical" evidence="2">
    <location>
        <begin position="226"/>
        <end position="246"/>
    </location>
</feature>
<feature type="transmembrane region" description="Helical" evidence="2">
    <location>
        <begin position="288"/>
        <end position="308"/>
    </location>
</feature>
<feature type="transmembrane region" description="Helical" evidence="2">
    <location>
        <begin position="320"/>
        <end position="340"/>
    </location>
</feature>
<feature type="transmembrane region" description="Helical" evidence="2">
    <location>
        <begin position="347"/>
        <end position="367"/>
    </location>
</feature>
<feature type="binding site" description="axial binding residue" evidence="2">
    <location>
        <position position="83"/>
    </location>
    <ligand>
        <name>heme b</name>
        <dbReference type="ChEBI" id="CHEBI:60344"/>
        <label>b562</label>
    </ligand>
    <ligandPart>
        <name>Fe</name>
        <dbReference type="ChEBI" id="CHEBI:18248"/>
    </ligandPart>
</feature>
<feature type="binding site" description="axial binding residue" evidence="2">
    <location>
        <position position="97"/>
    </location>
    <ligand>
        <name>heme b</name>
        <dbReference type="ChEBI" id="CHEBI:60344"/>
        <label>b566</label>
    </ligand>
    <ligandPart>
        <name>Fe</name>
        <dbReference type="ChEBI" id="CHEBI:18248"/>
    </ligandPart>
</feature>
<feature type="binding site" description="axial binding residue" evidence="2">
    <location>
        <position position="182"/>
    </location>
    <ligand>
        <name>heme b</name>
        <dbReference type="ChEBI" id="CHEBI:60344"/>
        <label>b562</label>
    </ligand>
    <ligandPart>
        <name>Fe</name>
        <dbReference type="ChEBI" id="CHEBI:18248"/>
    </ligandPart>
</feature>
<feature type="binding site" description="axial binding residue" evidence="2">
    <location>
        <position position="196"/>
    </location>
    <ligand>
        <name>heme b</name>
        <dbReference type="ChEBI" id="CHEBI:60344"/>
        <label>b566</label>
    </ligand>
    <ligandPart>
        <name>Fe</name>
        <dbReference type="ChEBI" id="CHEBI:18248"/>
    </ligandPart>
</feature>
<feature type="binding site" evidence="2">
    <location>
        <position position="201"/>
    </location>
    <ligand>
        <name>a ubiquinone</name>
        <dbReference type="ChEBI" id="CHEBI:16389"/>
    </ligand>
</feature>
<sequence length="379" mass="42742">MTNIRKSHPLAKIINESFIDLPAPSNISAWWNFGSLLGICLIIQILTGLFLAMHYTSDTMTAFSSVTHICRDVNYGWIIRYMHANGASMFFICLFMHVGRGLYYGSYTFTETWNIGILLMFTVMATAFMGYVLPWGQMSFWGATVITNLLSAIPYIGTSLVEWIWGGFSVDKATLTRFFAFHFILPFIISALAAVHLLFLHETGSNNPSGVMSNSDKIPFHPYYTTKDILGLLILILMLMLLVLFSPDLLGDPDNYIPANPLNTPPHIKPEWYFLFAYAILRSIPNKLGGVLALVLSILILAIIPLLHTSKQRSMMFRPLSQCLFWLLVADLLTLTWIGGQPVEHPFITIGQLASILYFSIFLILMPISGIIENRLLKW</sequence>
<protein>
    <recommendedName>
        <fullName>Cytochrome b</fullName>
    </recommendedName>
    <alternativeName>
        <fullName>Complex III subunit 3</fullName>
    </alternativeName>
    <alternativeName>
        <fullName>Complex III subunit III</fullName>
    </alternativeName>
    <alternativeName>
        <fullName>Cytochrome b-c1 complex subunit 3</fullName>
    </alternativeName>
    <alternativeName>
        <fullName>Ubiquinol-cytochrome-c reductase complex cytochrome b subunit</fullName>
    </alternativeName>
</protein>
<proteinExistence type="inferred from homology"/>
<dbReference type="EMBL" id="AF511049">
    <property type="protein sequence ID" value="AAQ08025.1"/>
    <property type="molecule type" value="Genomic_DNA"/>
</dbReference>
<dbReference type="SMR" id="Q71FI6"/>
<dbReference type="GO" id="GO:0005743">
    <property type="term" value="C:mitochondrial inner membrane"/>
    <property type="evidence" value="ECO:0007669"/>
    <property type="project" value="UniProtKB-SubCell"/>
</dbReference>
<dbReference type="GO" id="GO:0045275">
    <property type="term" value="C:respiratory chain complex III"/>
    <property type="evidence" value="ECO:0007669"/>
    <property type="project" value="InterPro"/>
</dbReference>
<dbReference type="GO" id="GO:0046872">
    <property type="term" value="F:metal ion binding"/>
    <property type="evidence" value="ECO:0007669"/>
    <property type="project" value="UniProtKB-KW"/>
</dbReference>
<dbReference type="GO" id="GO:0008121">
    <property type="term" value="F:ubiquinol-cytochrome-c reductase activity"/>
    <property type="evidence" value="ECO:0007669"/>
    <property type="project" value="InterPro"/>
</dbReference>
<dbReference type="GO" id="GO:0006122">
    <property type="term" value="P:mitochondrial electron transport, ubiquinol to cytochrome c"/>
    <property type="evidence" value="ECO:0007669"/>
    <property type="project" value="TreeGrafter"/>
</dbReference>
<dbReference type="CDD" id="cd00290">
    <property type="entry name" value="cytochrome_b_C"/>
    <property type="match status" value="1"/>
</dbReference>
<dbReference type="CDD" id="cd00284">
    <property type="entry name" value="Cytochrome_b_N"/>
    <property type="match status" value="1"/>
</dbReference>
<dbReference type="FunFam" id="1.20.810.10:FF:000002">
    <property type="entry name" value="Cytochrome b"/>
    <property type="match status" value="1"/>
</dbReference>
<dbReference type="Gene3D" id="1.20.810.10">
    <property type="entry name" value="Cytochrome Bc1 Complex, Chain C"/>
    <property type="match status" value="1"/>
</dbReference>
<dbReference type="InterPro" id="IPR005798">
    <property type="entry name" value="Cyt_b/b6_C"/>
</dbReference>
<dbReference type="InterPro" id="IPR036150">
    <property type="entry name" value="Cyt_b/b6_C_sf"/>
</dbReference>
<dbReference type="InterPro" id="IPR005797">
    <property type="entry name" value="Cyt_b/b6_N"/>
</dbReference>
<dbReference type="InterPro" id="IPR027387">
    <property type="entry name" value="Cytb/b6-like_sf"/>
</dbReference>
<dbReference type="InterPro" id="IPR030689">
    <property type="entry name" value="Cytochrome_b"/>
</dbReference>
<dbReference type="InterPro" id="IPR048260">
    <property type="entry name" value="Cytochrome_b_C_euk/bac"/>
</dbReference>
<dbReference type="InterPro" id="IPR048259">
    <property type="entry name" value="Cytochrome_b_N_euk/bac"/>
</dbReference>
<dbReference type="InterPro" id="IPR016174">
    <property type="entry name" value="Di-haem_cyt_TM"/>
</dbReference>
<dbReference type="PANTHER" id="PTHR19271">
    <property type="entry name" value="CYTOCHROME B"/>
    <property type="match status" value="1"/>
</dbReference>
<dbReference type="PANTHER" id="PTHR19271:SF16">
    <property type="entry name" value="CYTOCHROME B"/>
    <property type="match status" value="1"/>
</dbReference>
<dbReference type="Pfam" id="PF00032">
    <property type="entry name" value="Cytochrom_B_C"/>
    <property type="match status" value="1"/>
</dbReference>
<dbReference type="Pfam" id="PF00033">
    <property type="entry name" value="Cytochrome_B"/>
    <property type="match status" value="1"/>
</dbReference>
<dbReference type="PIRSF" id="PIRSF038885">
    <property type="entry name" value="COB"/>
    <property type="match status" value="1"/>
</dbReference>
<dbReference type="SUPFAM" id="SSF81648">
    <property type="entry name" value="a domain/subunit of cytochrome bc1 complex (Ubiquinol-cytochrome c reductase)"/>
    <property type="match status" value="1"/>
</dbReference>
<dbReference type="SUPFAM" id="SSF81342">
    <property type="entry name" value="Transmembrane di-heme cytochromes"/>
    <property type="match status" value="1"/>
</dbReference>
<dbReference type="PROSITE" id="PS51003">
    <property type="entry name" value="CYTB_CTER"/>
    <property type="match status" value="1"/>
</dbReference>
<dbReference type="PROSITE" id="PS51002">
    <property type="entry name" value="CYTB_NTER"/>
    <property type="match status" value="1"/>
</dbReference>
<gene>
    <name type="primary">MT-CYB</name>
    <name type="synonym">COB</name>
    <name type="synonym">CYTB</name>
    <name type="synonym">MTCYB</name>
</gene>
<reference key="1">
    <citation type="journal article" date="2004" name="Zool. Scr.">
        <title>First molecular evidence for reassessing phylogenetic affinities between genets (Genetta) and the enigmatic genet-like taxa Osbornictis, Poiana and Prionodon (Carnivora, Viverridae).</title>
        <authorList>
            <person name="Gaubert P."/>
            <person name="Tranier M."/>
            <person name="Delmas A.-S."/>
            <person name="Colyn M."/>
            <person name="Veron G."/>
        </authorList>
    </citation>
    <scope>NUCLEOTIDE SEQUENCE [GENOMIC DNA]</scope>
</reference>
<geneLocation type="mitochondrion"/>
<organism>
    <name type="scientific">Poiana richardsonii</name>
    <name type="common">African linsang</name>
    <dbReference type="NCBI Taxonomy" id="205654"/>
    <lineage>
        <taxon>Eukaryota</taxon>
        <taxon>Metazoa</taxon>
        <taxon>Chordata</taxon>
        <taxon>Craniata</taxon>
        <taxon>Vertebrata</taxon>
        <taxon>Euteleostomi</taxon>
        <taxon>Mammalia</taxon>
        <taxon>Eutheria</taxon>
        <taxon>Laurasiatheria</taxon>
        <taxon>Carnivora</taxon>
        <taxon>Feliformia</taxon>
        <taxon>Viverridae</taxon>
        <taxon>Viverrinae</taxon>
        <taxon>Poiana</taxon>
    </lineage>
</organism>
<evidence type="ECO:0000250" key="1"/>
<evidence type="ECO:0000250" key="2">
    <source>
        <dbReference type="UniProtKB" id="P00157"/>
    </source>
</evidence>
<evidence type="ECO:0000255" key="3">
    <source>
        <dbReference type="PROSITE-ProRule" id="PRU00967"/>
    </source>
</evidence>
<evidence type="ECO:0000255" key="4">
    <source>
        <dbReference type="PROSITE-ProRule" id="PRU00968"/>
    </source>
</evidence>
<name>CYB_POIRI</name>